<evidence type="ECO:0000250" key="1">
    <source>
        <dbReference type="UniProtKB" id="A0A0M3Q1Q3"/>
    </source>
</evidence>
<evidence type="ECO:0000250" key="2">
    <source>
        <dbReference type="UniProtKB" id="A0A1C9J6A7"/>
    </source>
</evidence>
<evidence type="ECO:0000250" key="3">
    <source>
        <dbReference type="UniProtKB" id="E2E2P0"/>
    </source>
</evidence>
<evidence type="ECO:0000250" key="4">
    <source>
        <dbReference type="UniProtKB" id="Q9X839"/>
    </source>
</evidence>
<evidence type="ECO:0000255" key="5"/>
<evidence type="ECO:0000269" key="6">
    <source>
    </source>
</evidence>
<evidence type="ECO:0000269" key="7">
    <source ref="2"/>
</evidence>
<evidence type="ECO:0000269" key="8">
    <source ref="3"/>
</evidence>
<evidence type="ECO:0000303" key="9">
    <source>
    </source>
</evidence>
<evidence type="ECO:0000305" key="10"/>
<name>TPS1F_ORIVU</name>
<sequence>MSTISIHHVGILRNPLPSKNKRALINNPWSLSLPRSSSASRLVKPCRISSKPDTKPAEITRRSANYEPSLWDFDYLQSLNGHQHYKKEEQLKREEELIVQVKMLLGTKMEAVKQLELIDDLKNLGLSYFFRDEIKKILTSIYNNSFENNNKVGDLYFTALGFRLLRQHGFNVSQRIFDCFKNEKGIHFDETLIGEDIKATLQLYEASFHLREGENTLELARQISTKYLQKMVDEGRINDENLSSWIRHSLDLPLHWRIQRLEARWFLDAYAAREDKNPLIFELAKLDFNIIQATQQEELKEVSRWWNDSCLAEKLPFVRDRIVKCCFWAVGLFELLEFGYQRKITAIIIHLITAIDDVYDVYGTLDELQLLTNAIRRWDTLSIDQLPYYMQLCYMTLHNYVSDLGYDILKDRGINTIPHIHQTWVSLVEAYLKEAKWYESGYTPSLEEYLNNAGFSIGVIPIVVALELSIPNSTIHHRTRIDHRHEILHQSGLVLRLADDLGTAQHEMEKGDVPKAIQCYMKDTNASEEEAREHVRFMIGEAWKGLNTAMAKADDCPFTEQAVEAAANLGRAAQFIYLDGDGHGNFQIRQHVEKLFFHPYV</sequence>
<keyword id="KW-0150">Chloroplast</keyword>
<keyword id="KW-0456">Lyase</keyword>
<keyword id="KW-0460">Magnesium</keyword>
<keyword id="KW-0464">Manganese</keyword>
<keyword id="KW-0479">Metal-binding</keyword>
<keyword id="KW-0934">Plastid</keyword>
<keyword id="KW-0809">Transit peptide</keyword>
<accession>E2E2P1</accession>
<protein>
    <recommendedName>
        <fullName evidence="9">Beta-phellandrene synthase</fullName>
        <ecNumber evidence="6 7">4.2.3.-</ecNumber>
    </recommendedName>
    <alternativeName>
        <fullName evidence="9">Sabinene synthase</fullName>
        <ecNumber evidence="6 7">4.2.3.110</ecNumber>
    </alternativeName>
    <alternativeName>
        <fullName evidence="9">Terpene synthase 1, chloroplastic</fullName>
        <shortName evidence="9">OvTPS1</shortName>
    </alternativeName>
</protein>
<reference key="1">
    <citation type="journal article" date="2010" name="Plant Mol. Biol.">
        <title>Terpene synthases of oregano (Origanum vulgare L.) and their roles in the pathway and regulation of terpene biosynthesis.</title>
        <authorList>
            <person name="Crocoll C."/>
            <person name="Asbach J."/>
            <person name="Novak J."/>
            <person name="Gershenzon J."/>
            <person name="Degenhardt J."/>
        </authorList>
    </citation>
    <scope>NUCLEOTIDE SEQUENCE [MRNA]</scope>
    <scope>FUNCTION</scope>
    <scope>CATALYTIC ACTIVITY</scope>
    <scope>PATHWAY</scope>
    <scope>TISSUE SPECIFICITY</scope>
    <source>
        <strain>cv. f02-04</strain>
        <tissue>Trichome gland</tissue>
    </source>
</reference>
<reference key="2">
    <citation type="thesis" date="2011" institute="Friedrich Schiller University of Jena" country="Germany">
        <title>Biosynthesis of the phenolic monoterpenes, thymol and carvacrol, by terpene synthases and cytochrome P450s in oregano and thyme.</title>
        <authorList>
            <person name="Crocoll C."/>
        </authorList>
    </citation>
    <scope>FUNCTION</scope>
    <scope>CATALYTIC ACTIVITY</scope>
    <scope>PATHWAY</scope>
</reference>
<reference key="3">
    <citation type="journal article" date="2018" name="Ind. Crops Prod.">
        <title>Divergence in tissue-specific expression patterns of genes associated with the terpenoid biosynthesis in two oregano species Origanum vulgare L., and Origanum majorana.</title>
        <authorList>
            <person name="Jan S."/>
            <person name="Mir J.I."/>
            <person name="Shafi W."/>
            <person name="Faktoo S.Z."/>
            <person name="Singh D.B."/>
            <person name="Wijaya L."/>
            <person name="Alyemeni M.N."/>
            <person name="Ahmad P."/>
        </authorList>
    </citation>
    <scope>TISSUE SPECIFICITY</scope>
</reference>
<organism>
    <name type="scientific">Origanum vulgare</name>
    <name type="common">Wild marjoram</name>
    <dbReference type="NCBI Taxonomy" id="39352"/>
    <lineage>
        <taxon>Eukaryota</taxon>
        <taxon>Viridiplantae</taxon>
        <taxon>Streptophyta</taxon>
        <taxon>Embryophyta</taxon>
        <taxon>Tracheophyta</taxon>
        <taxon>Spermatophyta</taxon>
        <taxon>Magnoliopsida</taxon>
        <taxon>eudicotyledons</taxon>
        <taxon>Gunneridae</taxon>
        <taxon>Pentapetalae</taxon>
        <taxon>asterids</taxon>
        <taxon>lamiids</taxon>
        <taxon>Lamiales</taxon>
        <taxon>Lamiaceae</taxon>
        <taxon>Nepetoideae</taxon>
        <taxon>Mentheae</taxon>
        <taxon>Origanum</taxon>
    </lineage>
</organism>
<gene>
    <name evidence="9" type="primary">TPS1</name>
</gene>
<comment type="function">
    <text evidence="6 7">Involved in the biosynthesis of phenolic monoterpenes natural products (PubMed:20419468, Ref.2). Monoterpene synthase that catalyzes mainly the formation of olefins such as sabinene and beta-phellandrene, and minor amounts of other monoterpenes (e.g. myrcene, gamma-terpinene, alpha-thujene and alpha-pinene) from geranyl diphosphate (GPP) (PubMed:20419468, Ref.2).</text>
</comment>
<comment type="catalytic activity">
    <reaction evidence="6 7">
        <text>(2E)-geranyl diphosphate = beta-phellandrene + diphosphate</text>
        <dbReference type="Rhea" id="RHEA:25504"/>
        <dbReference type="ChEBI" id="CHEBI:33019"/>
        <dbReference type="ChEBI" id="CHEBI:48741"/>
        <dbReference type="ChEBI" id="CHEBI:58057"/>
    </reaction>
    <physiologicalReaction direction="left-to-right" evidence="6 7">
        <dbReference type="Rhea" id="RHEA:25505"/>
    </physiologicalReaction>
</comment>
<comment type="catalytic activity">
    <reaction evidence="6 7">
        <text>(2E)-geranyl diphosphate = (1R,5R)-sabinene + diphosphate</text>
        <dbReference type="Rhea" id="RHEA:32547"/>
        <dbReference type="ChEBI" id="CHEBI:33019"/>
        <dbReference type="ChEBI" id="CHEBI:50029"/>
        <dbReference type="ChEBI" id="CHEBI:58057"/>
        <dbReference type="EC" id="4.2.3.110"/>
    </reaction>
    <physiologicalReaction direction="left-to-right" evidence="6 7">
        <dbReference type="Rhea" id="RHEA:32548"/>
    </physiologicalReaction>
</comment>
<comment type="cofactor">
    <cofactor evidence="3">
        <name>Mn(2+)</name>
        <dbReference type="ChEBI" id="CHEBI:29035"/>
    </cofactor>
    <cofactor evidence="3">
        <name>Mg(2+)</name>
        <dbReference type="ChEBI" id="CHEBI:18420"/>
    </cofactor>
    <text evidence="3">Binds 3 Mg(2+) or Mn(2+) ions per subunit.</text>
</comment>
<comment type="pathway">
    <text evidence="6 7">Secondary metabolite biosynthesis; terpenoid biosynthesis.</text>
</comment>
<comment type="subunit">
    <text evidence="1">Homodimer.</text>
</comment>
<comment type="subcellular location">
    <subcellularLocation>
        <location evidence="5">Plastid</location>
        <location evidence="5">Chloroplast</location>
    </subcellularLocation>
</comment>
<comment type="tissue specificity">
    <text evidence="6 8">Expressed in peltate glandular trichomes (PubMed:20419468). Present at low levels in flowers, leaves and stems (Ref.3).</text>
</comment>
<comment type="domain">
    <text evidence="4">The Asp-Asp-Xaa-Xaa-Asp/Glu (DDXXD/E) motif is important for the catalytic activity, presumably through binding to Mg(2+).</text>
</comment>
<comment type="similarity">
    <text evidence="10">Belongs to the terpene synthase family.</text>
</comment>
<proteinExistence type="evidence at protein level"/>
<feature type="transit peptide" description="Chloroplast" evidence="5">
    <location>
        <begin position="1"/>
        <end position="35"/>
    </location>
</feature>
<feature type="chain" id="PRO_0000453314" description="Beta-phellandrene synthase">
    <location>
        <begin position="36"/>
        <end position="601"/>
    </location>
</feature>
<feature type="region of interest" description="Homodimerization" evidence="1">
    <location>
        <begin position="362"/>
        <end position="368"/>
    </location>
</feature>
<feature type="region of interest" description="Homodimerization" evidence="1">
    <location>
        <begin position="434"/>
        <end position="471"/>
    </location>
</feature>
<feature type="short sequence motif" description="DDXXD motif" evidence="4">
    <location>
        <begin position="356"/>
        <end position="360"/>
    </location>
</feature>
<feature type="binding site" evidence="2">
    <location>
        <position position="356"/>
    </location>
    <ligand>
        <name>Mn(2+)</name>
        <dbReference type="ChEBI" id="CHEBI:29035"/>
        <label>1</label>
    </ligand>
</feature>
<feature type="binding site" evidence="2">
    <location>
        <position position="356"/>
    </location>
    <ligand>
        <name>Mn(2+)</name>
        <dbReference type="ChEBI" id="CHEBI:29035"/>
        <label>2</label>
    </ligand>
</feature>
<feature type="binding site" evidence="2">
    <location>
        <position position="360"/>
    </location>
    <ligand>
        <name>Mn(2+)</name>
        <dbReference type="ChEBI" id="CHEBI:29035"/>
        <label>1</label>
    </ligand>
</feature>
<feature type="binding site" evidence="2">
    <location>
        <position position="360"/>
    </location>
    <ligand>
        <name>Mn(2+)</name>
        <dbReference type="ChEBI" id="CHEBI:29035"/>
        <label>2</label>
    </ligand>
</feature>
<feature type="binding site" evidence="2">
    <location>
        <position position="499"/>
    </location>
    <ligand>
        <name>Mn(2+)</name>
        <dbReference type="ChEBI" id="CHEBI:29035"/>
        <label>3</label>
    </ligand>
</feature>
<feature type="binding site" evidence="2">
    <location>
        <position position="507"/>
    </location>
    <ligand>
        <name>Mn(2+)</name>
        <dbReference type="ChEBI" id="CHEBI:29035"/>
        <label>3</label>
    </ligand>
</feature>
<dbReference type="EC" id="4.2.3.-" evidence="6 7"/>
<dbReference type="EC" id="4.2.3.110" evidence="6 7"/>
<dbReference type="EMBL" id="GU385979">
    <property type="protein sequence ID" value="ADK73622.1"/>
    <property type="molecule type" value="mRNA"/>
</dbReference>
<dbReference type="SMR" id="E2E2P1"/>
<dbReference type="UniPathway" id="UPA00213"/>
<dbReference type="GO" id="GO:0009507">
    <property type="term" value="C:chloroplast"/>
    <property type="evidence" value="ECO:0007669"/>
    <property type="project" value="UniProtKB-SubCell"/>
</dbReference>
<dbReference type="GO" id="GO:0000287">
    <property type="term" value="F:magnesium ion binding"/>
    <property type="evidence" value="ECO:0007669"/>
    <property type="project" value="InterPro"/>
</dbReference>
<dbReference type="GO" id="GO:0042803">
    <property type="term" value="F:protein homodimerization activity"/>
    <property type="evidence" value="ECO:0000250"/>
    <property type="project" value="UniProtKB"/>
</dbReference>
<dbReference type="GO" id="GO:0010333">
    <property type="term" value="F:terpene synthase activity"/>
    <property type="evidence" value="ECO:0007669"/>
    <property type="project" value="InterPro"/>
</dbReference>
<dbReference type="GO" id="GO:0016102">
    <property type="term" value="P:diterpenoid biosynthetic process"/>
    <property type="evidence" value="ECO:0007669"/>
    <property type="project" value="InterPro"/>
</dbReference>
<dbReference type="CDD" id="cd00684">
    <property type="entry name" value="Terpene_cyclase_plant_C1"/>
    <property type="match status" value="1"/>
</dbReference>
<dbReference type="FunFam" id="1.10.600.10:FF:000007">
    <property type="entry name" value="Isoprene synthase, chloroplastic"/>
    <property type="match status" value="1"/>
</dbReference>
<dbReference type="FunFam" id="1.50.10.130:FF:000001">
    <property type="entry name" value="Isoprene synthase, chloroplastic"/>
    <property type="match status" value="1"/>
</dbReference>
<dbReference type="Gene3D" id="1.10.600.10">
    <property type="entry name" value="Farnesyl Diphosphate Synthase"/>
    <property type="match status" value="1"/>
</dbReference>
<dbReference type="Gene3D" id="1.50.10.130">
    <property type="entry name" value="Terpene synthase, N-terminal domain"/>
    <property type="match status" value="1"/>
</dbReference>
<dbReference type="InterPro" id="IPR008949">
    <property type="entry name" value="Isoprenoid_synthase_dom_sf"/>
</dbReference>
<dbReference type="InterPro" id="IPR034741">
    <property type="entry name" value="Terpene_cyclase-like_1_C"/>
</dbReference>
<dbReference type="InterPro" id="IPR044814">
    <property type="entry name" value="Terpene_cyclase_plant_C1"/>
</dbReference>
<dbReference type="InterPro" id="IPR001906">
    <property type="entry name" value="Terpene_synth_N"/>
</dbReference>
<dbReference type="InterPro" id="IPR036965">
    <property type="entry name" value="Terpene_synth_N_sf"/>
</dbReference>
<dbReference type="InterPro" id="IPR050148">
    <property type="entry name" value="Terpene_synthase-like"/>
</dbReference>
<dbReference type="InterPro" id="IPR005630">
    <property type="entry name" value="Terpene_synthase_metal-bd"/>
</dbReference>
<dbReference type="InterPro" id="IPR008930">
    <property type="entry name" value="Terpenoid_cyclase/PrenylTrfase"/>
</dbReference>
<dbReference type="PANTHER" id="PTHR31225">
    <property type="entry name" value="OS04G0344100 PROTEIN-RELATED"/>
    <property type="match status" value="1"/>
</dbReference>
<dbReference type="PANTHER" id="PTHR31225:SF9">
    <property type="entry name" value="TERPENE SYNTHASE 10"/>
    <property type="match status" value="1"/>
</dbReference>
<dbReference type="Pfam" id="PF01397">
    <property type="entry name" value="Terpene_synth"/>
    <property type="match status" value="1"/>
</dbReference>
<dbReference type="Pfam" id="PF03936">
    <property type="entry name" value="Terpene_synth_C"/>
    <property type="match status" value="1"/>
</dbReference>
<dbReference type="SFLD" id="SFLDS00005">
    <property type="entry name" value="Isoprenoid_Synthase_Type_I"/>
    <property type="match status" value="1"/>
</dbReference>
<dbReference type="SFLD" id="SFLDG01019">
    <property type="entry name" value="Terpene_Cyclase_Like_1_C_Termi"/>
    <property type="match status" value="1"/>
</dbReference>
<dbReference type="SUPFAM" id="SSF48239">
    <property type="entry name" value="Terpenoid cyclases/Protein prenyltransferases"/>
    <property type="match status" value="1"/>
</dbReference>
<dbReference type="SUPFAM" id="SSF48576">
    <property type="entry name" value="Terpenoid synthases"/>
    <property type="match status" value="1"/>
</dbReference>